<name>DPCKG_THEVO</name>
<keyword id="KW-0173">Coenzyme A biosynthesis</keyword>
<keyword id="KW-0342">GTP-binding</keyword>
<keyword id="KW-0418">Kinase</keyword>
<keyword id="KW-0547">Nucleotide-binding</keyword>
<keyword id="KW-0808">Transferase</keyword>
<evidence type="ECO:0000255" key="1">
    <source>
        <dbReference type="HAMAP-Rule" id="MF_00590"/>
    </source>
</evidence>
<evidence type="ECO:0000305" key="2"/>
<protein>
    <recommendedName>
        <fullName evidence="1">GTP-dependent dephospho-CoA kinase</fullName>
        <ecNumber evidence="1">2.7.1.237</ecNumber>
    </recommendedName>
    <alternativeName>
        <fullName evidence="1">Dephospho-coenzyme A kinase</fullName>
        <shortName evidence="1">DPCK</shortName>
    </alternativeName>
</protein>
<feature type="chain" id="PRO_0000137622" description="GTP-dependent dephospho-CoA kinase">
    <location>
        <begin position="1"/>
        <end position="166"/>
    </location>
</feature>
<feature type="binding site" evidence="1">
    <location>
        <position position="46"/>
    </location>
    <ligand>
        <name>GTP</name>
        <dbReference type="ChEBI" id="CHEBI:37565"/>
    </ligand>
</feature>
<feature type="binding site" evidence="1">
    <location>
        <position position="47"/>
    </location>
    <ligand>
        <name>GTP</name>
        <dbReference type="ChEBI" id="CHEBI:37565"/>
    </ligand>
</feature>
<feature type="binding site" evidence="1">
    <location>
        <position position="65"/>
    </location>
    <ligand>
        <name>GTP</name>
        <dbReference type="ChEBI" id="CHEBI:37565"/>
    </ligand>
</feature>
<feature type="binding site" evidence="1">
    <location>
        <position position="67"/>
    </location>
    <ligand>
        <name>GTP</name>
        <dbReference type="ChEBI" id="CHEBI:37565"/>
    </ligand>
</feature>
<feature type="binding site" evidence="1">
    <location>
        <position position="117"/>
    </location>
    <ligand>
        <name>GTP</name>
        <dbReference type="ChEBI" id="CHEBI:37565"/>
    </ligand>
</feature>
<feature type="binding site" evidence="1">
    <location>
        <position position="140"/>
    </location>
    <ligand>
        <name>GTP</name>
        <dbReference type="ChEBI" id="CHEBI:37565"/>
    </ligand>
</feature>
<sequence length="166" mass="18364">MLLRSGSKYIITAEAREEIKKRNGKLVTIDEMVEVSKSTQLDSVGDVTTTNLRRAGAKLFLQIVDLKTKRGESIFQHEEGSITVRNDPGTISFDLIEAIKSSIENNKPTRIEVIGEEDLAVLPIIYYSKNNTVIAYGIPDVGMAALTVTDDLRDHVTEVIAKMAIE</sequence>
<accession>Q97BH2</accession>
<organism>
    <name type="scientific">Thermoplasma volcanium (strain ATCC 51530 / DSM 4299 / JCM 9571 / NBRC 15438 / GSS1)</name>
    <dbReference type="NCBI Taxonomy" id="273116"/>
    <lineage>
        <taxon>Archaea</taxon>
        <taxon>Methanobacteriati</taxon>
        <taxon>Thermoplasmatota</taxon>
        <taxon>Thermoplasmata</taxon>
        <taxon>Thermoplasmatales</taxon>
        <taxon>Thermoplasmataceae</taxon>
        <taxon>Thermoplasma</taxon>
    </lineage>
</organism>
<dbReference type="EC" id="2.7.1.237" evidence="1"/>
<dbReference type="EMBL" id="BA000011">
    <property type="protein sequence ID" value="BAB59625.1"/>
    <property type="status" value="ALT_INIT"/>
    <property type="molecule type" value="Genomic_DNA"/>
</dbReference>
<dbReference type="RefSeq" id="WP_010916742.1">
    <property type="nucleotide sequence ID" value="NC_002689.2"/>
</dbReference>
<dbReference type="SMR" id="Q97BH2"/>
<dbReference type="STRING" id="273116.gene:9381265"/>
<dbReference type="PaxDb" id="273116-14324698"/>
<dbReference type="GeneID" id="1441000"/>
<dbReference type="KEGG" id="tvo:TVG0468984"/>
<dbReference type="eggNOG" id="arCOG04076">
    <property type="taxonomic scope" value="Archaea"/>
</dbReference>
<dbReference type="HOGENOM" id="CLU_120795_1_0_2"/>
<dbReference type="OrthoDB" id="15447at2157"/>
<dbReference type="PhylomeDB" id="Q97BH2"/>
<dbReference type="UniPathway" id="UPA00241"/>
<dbReference type="Proteomes" id="UP000001017">
    <property type="component" value="Chromosome"/>
</dbReference>
<dbReference type="GO" id="GO:0005525">
    <property type="term" value="F:GTP binding"/>
    <property type="evidence" value="ECO:0007669"/>
    <property type="project" value="UniProtKB-UniRule"/>
</dbReference>
<dbReference type="GO" id="GO:0016301">
    <property type="term" value="F:kinase activity"/>
    <property type="evidence" value="ECO:0007669"/>
    <property type="project" value="UniProtKB-UniRule"/>
</dbReference>
<dbReference type="GO" id="GO:0015937">
    <property type="term" value="P:coenzyme A biosynthetic process"/>
    <property type="evidence" value="ECO:0007669"/>
    <property type="project" value="UniProtKB-UniRule"/>
</dbReference>
<dbReference type="HAMAP" id="MF_00590">
    <property type="entry name" value="Dephospho_CoA_kinase_GTP_dep"/>
    <property type="match status" value="1"/>
</dbReference>
<dbReference type="InterPro" id="IPR007164">
    <property type="entry name" value="GTP-dep_dephospho-CoA_kin"/>
</dbReference>
<dbReference type="NCBIfam" id="NF002249">
    <property type="entry name" value="PRK01160.1-4"/>
    <property type="match status" value="1"/>
</dbReference>
<dbReference type="PANTHER" id="PTHR40732:SF1">
    <property type="entry name" value="GTP-DEPENDENT DEPHOSPHO-COA KINASE"/>
    <property type="match status" value="1"/>
</dbReference>
<dbReference type="PANTHER" id="PTHR40732">
    <property type="entry name" value="UPF0218 PROTEIN TK1697"/>
    <property type="match status" value="1"/>
</dbReference>
<dbReference type="Pfam" id="PF04019">
    <property type="entry name" value="DUF359"/>
    <property type="match status" value="1"/>
</dbReference>
<dbReference type="PIRSF" id="PIRSF006533">
    <property type="entry name" value="UCP006533"/>
    <property type="match status" value="1"/>
</dbReference>
<reference key="1">
    <citation type="journal article" date="2000" name="Proc. Natl. Acad. Sci. U.S.A.">
        <title>Archaeal adaptation to higher temperatures revealed by genomic sequence of Thermoplasma volcanium.</title>
        <authorList>
            <person name="Kawashima T."/>
            <person name="Amano N."/>
            <person name="Koike H."/>
            <person name="Makino S."/>
            <person name="Higuchi S."/>
            <person name="Kawashima-Ohya Y."/>
            <person name="Watanabe K."/>
            <person name="Yamazaki M."/>
            <person name="Kanehori K."/>
            <person name="Kawamoto T."/>
            <person name="Nunoshiba T."/>
            <person name="Yamamoto Y."/>
            <person name="Aramaki H."/>
            <person name="Makino K."/>
            <person name="Suzuki M."/>
        </authorList>
    </citation>
    <scope>NUCLEOTIDE SEQUENCE [LARGE SCALE GENOMIC DNA]</scope>
    <source>
        <strain>ATCC 51530 / DSM 4299 / JCM 9571 / NBRC 15438 / GSS1</strain>
    </source>
</reference>
<comment type="function">
    <text evidence="1">Catalyzes the GTP-dependent phosphorylation of the 3'-hydroxyl group of dephosphocoenzyme A to form coenzyme A (CoA).</text>
</comment>
<comment type="catalytic activity">
    <reaction evidence="1">
        <text>3'-dephospho-CoA + GTP = GDP + CoA + H(+)</text>
        <dbReference type="Rhea" id="RHEA:61156"/>
        <dbReference type="ChEBI" id="CHEBI:15378"/>
        <dbReference type="ChEBI" id="CHEBI:37565"/>
        <dbReference type="ChEBI" id="CHEBI:57287"/>
        <dbReference type="ChEBI" id="CHEBI:57328"/>
        <dbReference type="ChEBI" id="CHEBI:58189"/>
        <dbReference type="EC" id="2.7.1.237"/>
    </reaction>
</comment>
<comment type="pathway">
    <text evidence="1">Cofactor biosynthesis; coenzyme A biosynthesis.</text>
</comment>
<comment type="similarity">
    <text evidence="1">Belongs to the GTP-dependent DPCK family.</text>
</comment>
<comment type="sequence caution" evidence="2">
    <conflict type="erroneous initiation">
        <sequence resource="EMBL-CDS" id="BAB59625"/>
    </conflict>
</comment>
<gene>
    <name type="ordered locus">TV0483</name>
    <name type="ORF">TVG0468984</name>
</gene>
<proteinExistence type="inferred from homology"/>